<organism>
    <name type="scientific">Bos taurus</name>
    <name type="common">Bovine</name>
    <dbReference type="NCBI Taxonomy" id="9913"/>
    <lineage>
        <taxon>Eukaryota</taxon>
        <taxon>Metazoa</taxon>
        <taxon>Chordata</taxon>
        <taxon>Craniata</taxon>
        <taxon>Vertebrata</taxon>
        <taxon>Euteleostomi</taxon>
        <taxon>Mammalia</taxon>
        <taxon>Eutheria</taxon>
        <taxon>Laurasiatheria</taxon>
        <taxon>Artiodactyla</taxon>
        <taxon>Ruminantia</taxon>
        <taxon>Pecora</taxon>
        <taxon>Bovidae</taxon>
        <taxon>Bovinae</taxon>
        <taxon>Bos</taxon>
    </lineage>
</organism>
<proteinExistence type="evidence at transcript level"/>
<gene>
    <name type="primary">FBXO8</name>
</gene>
<comment type="function">
    <text evidence="3">May promote guanine-nucleotide exchange on an ARF. Promotes the activation of ARF through replacement of GDP with GTP (Potential).</text>
</comment>
<protein>
    <recommendedName>
        <fullName>F-box only protein 8</fullName>
    </recommendedName>
</protein>
<accession>Q5E9G6</accession>
<dbReference type="EMBL" id="BT020782">
    <property type="protein sequence ID" value="AAX08799.1"/>
    <property type="molecule type" value="mRNA"/>
</dbReference>
<dbReference type="EMBL" id="BT020954">
    <property type="protein sequence ID" value="AAX08971.1"/>
    <property type="molecule type" value="mRNA"/>
</dbReference>
<dbReference type="EMBL" id="BC103444">
    <property type="protein sequence ID" value="AAI03445.1"/>
    <property type="molecule type" value="mRNA"/>
</dbReference>
<dbReference type="RefSeq" id="NP_001015667.1">
    <property type="nucleotide sequence ID" value="NM_001015667.3"/>
</dbReference>
<dbReference type="RefSeq" id="XP_010805991.1">
    <property type="nucleotide sequence ID" value="XM_010807689.2"/>
</dbReference>
<dbReference type="SMR" id="Q5E9G6"/>
<dbReference type="FunCoup" id="Q5E9G6">
    <property type="interactions" value="1082"/>
</dbReference>
<dbReference type="STRING" id="9913.ENSBTAP00000008831"/>
<dbReference type="PaxDb" id="9913-ENSBTAP00000008831"/>
<dbReference type="Ensembl" id="ENSBTAT00000008831.5">
    <property type="protein sequence ID" value="ENSBTAP00000008831.3"/>
    <property type="gene ID" value="ENSBTAG00000006715.5"/>
</dbReference>
<dbReference type="GeneID" id="538528"/>
<dbReference type="KEGG" id="bta:538528"/>
<dbReference type="CTD" id="26269"/>
<dbReference type="VEuPathDB" id="HostDB:ENSBTAG00000006715"/>
<dbReference type="VGNC" id="VGNC:28920">
    <property type="gene designation" value="FBXO8"/>
</dbReference>
<dbReference type="eggNOG" id="KOG0929">
    <property type="taxonomic scope" value="Eukaryota"/>
</dbReference>
<dbReference type="GeneTree" id="ENSGT00940000158356"/>
<dbReference type="HOGENOM" id="CLU_057531_0_0_1"/>
<dbReference type="InParanoid" id="Q5E9G6"/>
<dbReference type="OMA" id="NANPHEG"/>
<dbReference type="OrthoDB" id="430364at2759"/>
<dbReference type="Proteomes" id="UP000009136">
    <property type="component" value="Chromosome 8"/>
</dbReference>
<dbReference type="Bgee" id="ENSBTAG00000006715">
    <property type="expression patterns" value="Expressed in oocyte and 103 other cell types or tissues"/>
</dbReference>
<dbReference type="GO" id="GO:0000151">
    <property type="term" value="C:ubiquitin ligase complex"/>
    <property type="evidence" value="ECO:0007669"/>
    <property type="project" value="Ensembl"/>
</dbReference>
<dbReference type="GO" id="GO:0005085">
    <property type="term" value="F:guanyl-nucleotide exchange factor activity"/>
    <property type="evidence" value="ECO:0007669"/>
    <property type="project" value="UniProtKB-KW"/>
</dbReference>
<dbReference type="GO" id="GO:0032012">
    <property type="term" value="P:regulation of ARF protein signal transduction"/>
    <property type="evidence" value="ECO:0007669"/>
    <property type="project" value="InterPro"/>
</dbReference>
<dbReference type="GO" id="GO:0006511">
    <property type="term" value="P:ubiquitin-dependent protein catabolic process"/>
    <property type="evidence" value="ECO:0007669"/>
    <property type="project" value="Ensembl"/>
</dbReference>
<dbReference type="CDD" id="cd22088">
    <property type="entry name" value="F-box_FBXO8"/>
    <property type="match status" value="1"/>
</dbReference>
<dbReference type="CDD" id="cd00171">
    <property type="entry name" value="Sec7"/>
    <property type="match status" value="1"/>
</dbReference>
<dbReference type="FunFam" id="1.10.1000.11:FF:000008">
    <property type="entry name" value="F-box only protein 8"/>
    <property type="match status" value="1"/>
</dbReference>
<dbReference type="FunFam" id="1.10.220.20:FF:000006">
    <property type="entry name" value="F-box only protein 8"/>
    <property type="match status" value="1"/>
</dbReference>
<dbReference type="FunFam" id="1.20.1280.50:FF:000014">
    <property type="entry name" value="F-box only protein 8"/>
    <property type="match status" value="1"/>
</dbReference>
<dbReference type="Gene3D" id="1.10.220.20">
    <property type="match status" value="1"/>
</dbReference>
<dbReference type="Gene3D" id="1.20.1280.50">
    <property type="match status" value="1"/>
</dbReference>
<dbReference type="Gene3D" id="1.10.1000.11">
    <property type="entry name" value="Arf Nucleotide-binding Site Opener,domain 2"/>
    <property type="match status" value="1"/>
</dbReference>
<dbReference type="InterPro" id="IPR036047">
    <property type="entry name" value="F-box-like_dom_sf"/>
</dbReference>
<dbReference type="InterPro" id="IPR001810">
    <property type="entry name" value="F-box_dom"/>
</dbReference>
<dbReference type="InterPro" id="IPR048003">
    <property type="entry name" value="FBXO8_F-box"/>
</dbReference>
<dbReference type="InterPro" id="IPR023394">
    <property type="entry name" value="Sec7_C_sf"/>
</dbReference>
<dbReference type="InterPro" id="IPR000904">
    <property type="entry name" value="Sec7_dom"/>
</dbReference>
<dbReference type="InterPro" id="IPR035999">
    <property type="entry name" value="Sec7_dom_sf"/>
</dbReference>
<dbReference type="PANTHER" id="PTHR10663:SF372">
    <property type="entry name" value="F-BOX ONLY PROTEIN 8"/>
    <property type="match status" value="1"/>
</dbReference>
<dbReference type="PANTHER" id="PTHR10663">
    <property type="entry name" value="GUANYL-NUCLEOTIDE EXCHANGE FACTOR"/>
    <property type="match status" value="1"/>
</dbReference>
<dbReference type="Pfam" id="PF12937">
    <property type="entry name" value="F-box-like"/>
    <property type="match status" value="1"/>
</dbReference>
<dbReference type="Pfam" id="PF01369">
    <property type="entry name" value="Sec7"/>
    <property type="match status" value="1"/>
</dbReference>
<dbReference type="SMART" id="SM00222">
    <property type="entry name" value="Sec7"/>
    <property type="match status" value="1"/>
</dbReference>
<dbReference type="SUPFAM" id="SSF81383">
    <property type="entry name" value="F-box domain"/>
    <property type="match status" value="1"/>
</dbReference>
<dbReference type="SUPFAM" id="SSF48425">
    <property type="entry name" value="Sec7 domain"/>
    <property type="match status" value="1"/>
</dbReference>
<dbReference type="PROSITE" id="PS50181">
    <property type="entry name" value="FBOX"/>
    <property type="match status" value="1"/>
</dbReference>
<dbReference type="PROSITE" id="PS50190">
    <property type="entry name" value="SEC7"/>
    <property type="match status" value="1"/>
</dbReference>
<sequence>MGQGLWRVARNQQLQQEGYGEQGYLSREQSRRVAASNMSHTSHRKHVQGGIDIYHLLKTRKSKEQEGFINLEMLPPELSFTILSYLNATDLCLASCVWQDLANDELLWQGLCKSTWGHCSIYNKNPPLGFSFRKLYMQLDEGSLTFNANPDEGVNYFMSKGILDDSPKEIAKFIFCTRTLNWKKLRIYLDERRDVLDDLVTLHNFRNQFLPNALREFFRHIHAPEERGEYLETLITKFSHRFCACNPDLMRELGLSPDAVYVLCYSLILLSIDLTSPHVKNKMSKREFIRNTRRAAQNISEDFVGHLYDNIYLIGHVAA</sequence>
<name>FBX8_BOVIN</name>
<feature type="chain" id="PRO_0000244602" description="F-box only protein 8">
    <location>
        <begin position="1"/>
        <end position="319"/>
    </location>
</feature>
<feature type="domain" description="F-box" evidence="1">
    <location>
        <begin position="68"/>
        <end position="111"/>
    </location>
</feature>
<feature type="domain" description="SEC7" evidence="2">
    <location>
        <begin position="146"/>
        <end position="276"/>
    </location>
</feature>
<evidence type="ECO:0000255" key="1">
    <source>
        <dbReference type="PROSITE-ProRule" id="PRU00080"/>
    </source>
</evidence>
<evidence type="ECO:0000255" key="2">
    <source>
        <dbReference type="PROSITE-ProRule" id="PRU00189"/>
    </source>
</evidence>
<evidence type="ECO:0000305" key="3"/>
<keyword id="KW-0344">Guanine-nucleotide releasing factor</keyword>
<keyword id="KW-1185">Reference proteome</keyword>
<reference key="1">
    <citation type="journal article" date="2005" name="BMC Genomics">
        <title>Characterization of 954 bovine full-CDS cDNA sequences.</title>
        <authorList>
            <person name="Harhay G.P."/>
            <person name="Sonstegard T.S."/>
            <person name="Keele J.W."/>
            <person name="Heaton M.P."/>
            <person name="Clawson M.L."/>
            <person name="Snelling W.M."/>
            <person name="Wiedmann R.T."/>
            <person name="Van Tassell C.P."/>
            <person name="Smith T.P.L."/>
        </authorList>
    </citation>
    <scope>NUCLEOTIDE SEQUENCE [LARGE SCALE MRNA]</scope>
</reference>
<reference key="2">
    <citation type="submission" date="2005-08" db="EMBL/GenBank/DDBJ databases">
        <authorList>
            <consortium name="NIH - Mammalian Gene Collection (MGC) project"/>
        </authorList>
    </citation>
    <scope>NUCLEOTIDE SEQUENCE [LARGE SCALE MRNA]</scope>
    <source>
        <strain>Hereford</strain>
        <tissue>Thymus</tissue>
    </source>
</reference>